<keyword id="KW-0067">ATP-binding</keyword>
<keyword id="KW-0963">Cytoplasm</keyword>
<keyword id="KW-0227">DNA damage</keyword>
<keyword id="KW-0233">DNA recombination</keyword>
<keyword id="KW-0234">DNA repair</keyword>
<keyword id="KW-0238">DNA-binding</keyword>
<keyword id="KW-0378">Hydrolase</keyword>
<keyword id="KW-0547">Nucleotide-binding</keyword>
<keyword id="KW-1185">Reference proteome</keyword>
<organism>
    <name type="scientific">Magnetococcus marinus (strain ATCC BAA-1437 / JCM 17883 / MC-1)</name>
    <dbReference type="NCBI Taxonomy" id="156889"/>
    <lineage>
        <taxon>Bacteria</taxon>
        <taxon>Pseudomonadati</taxon>
        <taxon>Pseudomonadota</taxon>
        <taxon>Alphaproteobacteria</taxon>
        <taxon>Magnetococcales</taxon>
        <taxon>Magnetococcaceae</taxon>
        <taxon>Magnetococcus</taxon>
    </lineage>
</organism>
<gene>
    <name evidence="1" type="primary">ruvB</name>
    <name type="ordered locus">Mmc1_0473</name>
</gene>
<name>RUVB_MAGMM</name>
<accession>A0L4V5</accession>
<proteinExistence type="inferred from homology"/>
<dbReference type="EC" id="3.6.4.-" evidence="1"/>
<dbReference type="EMBL" id="CP000471">
    <property type="protein sequence ID" value="ABK42998.1"/>
    <property type="molecule type" value="Genomic_DNA"/>
</dbReference>
<dbReference type="RefSeq" id="WP_011712168.1">
    <property type="nucleotide sequence ID" value="NC_008576.1"/>
</dbReference>
<dbReference type="SMR" id="A0L4V5"/>
<dbReference type="STRING" id="156889.Mmc1_0473"/>
<dbReference type="KEGG" id="mgm:Mmc1_0473"/>
<dbReference type="eggNOG" id="COG2255">
    <property type="taxonomic scope" value="Bacteria"/>
</dbReference>
<dbReference type="HOGENOM" id="CLU_055599_1_0_5"/>
<dbReference type="OrthoDB" id="9804478at2"/>
<dbReference type="Proteomes" id="UP000002586">
    <property type="component" value="Chromosome"/>
</dbReference>
<dbReference type="GO" id="GO:0005737">
    <property type="term" value="C:cytoplasm"/>
    <property type="evidence" value="ECO:0007669"/>
    <property type="project" value="UniProtKB-SubCell"/>
</dbReference>
<dbReference type="GO" id="GO:0048476">
    <property type="term" value="C:Holliday junction resolvase complex"/>
    <property type="evidence" value="ECO:0007669"/>
    <property type="project" value="UniProtKB-UniRule"/>
</dbReference>
<dbReference type="GO" id="GO:0005524">
    <property type="term" value="F:ATP binding"/>
    <property type="evidence" value="ECO:0007669"/>
    <property type="project" value="UniProtKB-UniRule"/>
</dbReference>
<dbReference type="GO" id="GO:0016887">
    <property type="term" value="F:ATP hydrolysis activity"/>
    <property type="evidence" value="ECO:0007669"/>
    <property type="project" value="InterPro"/>
</dbReference>
<dbReference type="GO" id="GO:0000400">
    <property type="term" value="F:four-way junction DNA binding"/>
    <property type="evidence" value="ECO:0007669"/>
    <property type="project" value="UniProtKB-UniRule"/>
</dbReference>
<dbReference type="GO" id="GO:0009378">
    <property type="term" value="F:four-way junction helicase activity"/>
    <property type="evidence" value="ECO:0007669"/>
    <property type="project" value="InterPro"/>
</dbReference>
<dbReference type="GO" id="GO:0006310">
    <property type="term" value="P:DNA recombination"/>
    <property type="evidence" value="ECO:0007669"/>
    <property type="project" value="UniProtKB-UniRule"/>
</dbReference>
<dbReference type="GO" id="GO:0006281">
    <property type="term" value="P:DNA repair"/>
    <property type="evidence" value="ECO:0007669"/>
    <property type="project" value="UniProtKB-UniRule"/>
</dbReference>
<dbReference type="CDD" id="cd00009">
    <property type="entry name" value="AAA"/>
    <property type="match status" value="1"/>
</dbReference>
<dbReference type="FunFam" id="1.10.8.60:FF:000023">
    <property type="entry name" value="Holliday junction ATP-dependent DNA helicase RuvB"/>
    <property type="match status" value="1"/>
</dbReference>
<dbReference type="Gene3D" id="1.10.8.60">
    <property type="match status" value="1"/>
</dbReference>
<dbReference type="Gene3D" id="3.40.50.300">
    <property type="entry name" value="P-loop containing nucleotide triphosphate hydrolases"/>
    <property type="match status" value="1"/>
</dbReference>
<dbReference type="Gene3D" id="1.10.10.10">
    <property type="entry name" value="Winged helix-like DNA-binding domain superfamily/Winged helix DNA-binding domain"/>
    <property type="match status" value="1"/>
</dbReference>
<dbReference type="HAMAP" id="MF_00016">
    <property type="entry name" value="DNA_HJ_migration_RuvB"/>
    <property type="match status" value="1"/>
</dbReference>
<dbReference type="InterPro" id="IPR003593">
    <property type="entry name" value="AAA+_ATPase"/>
</dbReference>
<dbReference type="InterPro" id="IPR041445">
    <property type="entry name" value="AAA_lid_4"/>
</dbReference>
<dbReference type="InterPro" id="IPR004605">
    <property type="entry name" value="DNA_helicase_Holl-junc_RuvB"/>
</dbReference>
<dbReference type="InterPro" id="IPR027417">
    <property type="entry name" value="P-loop_NTPase"/>
</dbReference>
<dbReference type="InterPro" id="IPR008824">
    <property type="entry name" value="RuvB-like_N"/>
</dbReference>
<dbReference type="InterPro" id="IPR008823">
    <property type="entry name" value="RuvB_C"/>
</dbReference>
<dbReference type="InterPro" id="IPR036388">
    <property type="entry name" value="WH-like_DNA-bd_sf"/>
</dbReference>
<dbReference type="InterPro" id="IPR036390">
    <property type="entry name" value="WH_DNA-bd_sf"/>
</dbReference>
<dbReference type="NCBIfam" id="NF000868">
    <property type="entry name" value="PRK00080.1"/>
    <property type="match status" value="1"/>
</dbReference>
<dbReference type="NCBIfam" id="TIGR00635">
    <property type="entry name" value="ruvB"/>
    <property type="match status" value="1"/>
</dbReference>
<dbReference type="PANTHER" id="PTHR42848">
    <property type="match status" value="1"/>
</dbReference>
<dbReference type="PANTHER" id="PTHR42848:SF1">
    <property type="entry name" value="HOLLIDAY JUNCTION BRANCH MIGRATION COMPLEX SUBUNIT RUVB"/>
    <property type="match status" value="1"/>
</dbReference>
<dbReference type="Pfam" id="PF17864">
    <property type="entry name" value="AAA_lid_4"/>
    <property type="match status" value="1"/>
</dbReference>
<dbReference type="Pfam" id="PF05491">
    <property type="entry name" value="RuvB_C"/>
    <property type="match status" value="1"/>
</dbReference>
<dbReference type="Pfam" id="PF05496">
    <property type="entry name" value="RuvB_N"/>
    <property type="match status" value="1"/>
</dbReference>
<dbReference type="SMART" id="SM00382">
    <property type="entry name" value="AAA"/>
    <property type="match status" value="1"/>
</dbReference>
<dbReference type="SUPFAM" id="SSF52540">
    <property type="entry name" value="P-loop containing nucleoside triphosphate hydrolases"/>
    <property type="match status" value="1"/>
</dbReference>
<dbReference type="SUPFAM" id="SSF46785">
    <property type="entry name" value="Winged helix' DNA-binding domain"/>
    <property type="match status" value="1"/>
</dbReference>
<comment type="function">
    <text evidence="1">The RuvA-RuvB-RuvC complex processes Holliday junction (HJ) DNA during genetic recombination and DNA repair, while the RuvA-RuvB complex plays an important role in the rescue of blocked DNA replication forks via replication fork reversal (RFR). RuvA specifically binds to HJ cruciform DNA, conferring on it an open structure. The RuvB hexamer acts as an ATP-dependent pump, pulling dsDNA into and through the RuvAB complex. RuvB forms 2 homohexamers on either side of HJ DNA bound by 1 or 2 RuvA tetramers; 4 subunits per hexamer contact DNA at a time. Coordinated motions by a converter formed by DNA-disengaged RuvB subunits stimulates ATP hydrolysis and nucleotide exchange. Immobilization of the converter enables RuvB to convert the ATP-contained energy into a lever motion, pulling 2 nucleotides of DNA out of the RuvA tetramer per ATP hydrolyzed, thus driving DNA branch migration. The RuvB motors rotate together with the DNA substrate, which together with the progressing nucleotide cycle form the mechanistic basis for DNA recombination by continuous HJ branch migration. Branch migration allows RuvC to scan DNA until it finds its consensus sequence, where it cleaves and resolves cruciform DNA.</text>
</comment>
<comment type="catalytic activity">
    <reaction evidence="1">
        <text>ATP + H2O = ADP + phosphate + H(+)</text>
        <dbReference type="Rhea" id="RHEA:13065"/>
        <dbReference type="ChEBI" id="CHEBI:15377"/>
        <dbReference type="ChEBI" id="CHEBI:15378"/>
        <dbReference type="ChEBI" id="CHEBI:30616"/>
        <dbReference type="ChEBI" id="CHEBI:43474"/>
        <dbReference type="ChEBI" id="CHEBI:456216"/>
    </reaction>
</comment>
<comment type="subunit">
    <text evidence="1">Homohexamer. Forms an RuvA(8)-RuvB(12)-Holliday junction (HJ) complex. HJ DNA is sandwiched between 2 RuvA tetramers; dsDNA enters through RuvA and exits via RuvB. An RuvB hexamer assembles on each DNA strand where it exits the tetramer. Each RuvB hexamer is contacted by two RuvA subunits (via domain III) on 2 adjacent RuvB subunits; this complex drives branch migration. In the full resolvosome a probable DNA-RuvA(4)-RuvB(12)-RuvC(2) complex forms which resolves the HJ.</text>
</comment>
<comment type="subcellular location">
    <subcellularLocation>
        <location evidence="1">Cytoplasm</location>
    </subcellularLocation>
</comment>
<comment type="domain">
    <text evidence="1">Has 3 domains, the large (RuvB-L) and small ATPase (RuvB-S) domains and the C-terminal head (RuvB-H) domain. The head domain binds DNA, while the ATPase domains jointly bind ATP, ADP or are empty depending on the state of the subunit in the translocation cycle. During a single DNA translocation step the structure of each domain remains the same, but their relative positions change.</text>
</comment>
<comment type="similarity">
    <text evidence="1">Belongs to the RuvB family.</text>
</comment>
<reference key="1">
    <citation type="journal article" date="2009" name="Appl. Environ. Microbiol.">
        <title>Complete genome sequence of the chemolithoautotrophic marine magnetotactic coccus strain MC-1.</title>
        <authorList>
            <person name="Schubbe S."/>
            <person name="Williams T.J."/>
            <person name="Xie G."/>
            <person name="Kiss H.E."/>
            <person name="Brettin T.S."/>
            <person name="Martinez D."/>
            <person name="Ross C.A."/>
            <person name="Schuler D."/>
            <person name="Cox B.L."/>
            <person name="Nealson K.H."/>
            <person name="Bazylinski D.A."/>
        </authorList>
    </citation>
    <scope>NUCLEOTIDE SEQUENCE [LARGE SCALE GENOMIC DNA]</scope>
    <source>
        <strain>ATCC BAA-1437 / JCM 17883 / MC-1</strain>
    </source>
</reference>
<feature type="chain" id="PRO_0000322812" description="Holliday junction branch migration complex subunit RuvB">
    <location>
        <begin position="1"/>
        <end position="343"/>
    </location>
</feature>
<feature type="region of interest" description="Large ATPase domain (RuvB-L)" evidence="1">
    <location>
        <begin position="1"/>
        <end position="185"/>
    </location>
</feature>
<feature type="region of interest" description="Disordered" evidence="2">
    <location>
        <begin position="1"/>
        <end position="20"/>
    </location>
</feature>
<feature type="region of interest" description="Small ATPAse domain (RuvB-S)" evidence="1">
    <location>
        <begin position="186"/>
        <end position="256"/>
    </location>
</feature>
<feature type="region of interest" description="Head domain (RuvB-H)" evidence="1">
    <location>
        <begin position="259"/>
        <end position="343"/>
    </location>
</feature>
<feature type="binding site" evidence="1">
    <location>
        <position position="24"/>
    </location>
    <ligand>
        <name>ATP</name>
        <dbReference type="ChEBI" id="CHEBI:30616"/>
    </ligand>
</feature>
<feature type="binding site" evidence="1">
    <location>
        <position position="25"/>
    </location>
    <ligand>
        <name>ATP</name>
        <dbReference type="ChEBI" id="CHEBI:30616"/>
    </ligand>
</feature>
<feature type="binding site" evidence="1">
    <location>
        <position position="66"/>
    </location>
    <ligand>
        <name>ATP</name>
        <dbReference type="ChEBI" id="CHEBI:30616"/>
    </ligand>
</feature>
<feature type="binding site" evidence="1">
    <location>
        <position position="69"/>
    </location>
    <ligand>
        <name>ATP</name>
        <dbReference type="ChEBI" id="CHEBI:30616"/>
    </ligand>
</feature>
<feature type="binding site" evidence="1">
    <location>
        <position position="70"/>
    </location>
    <ligand>
        <name>ATP</name>
        <dbReference type="ChEBI" id="CHEBI:30616"/>
    </ligand>
</feature>
<feature type="binding site" evidence="1">
    <location>
        <position position="70"/>
    </location>
    <ligand>
        <name>Mg(2+)</name>
        <dbReference type="ChEBI" id="CHEBI:18420"/>
    </ligand>
</feature>
<feature type="binding site" evidence="1">
    <location>
        <position position="71"/>
    </location>
    <ligand>
        <name>ATP</name>
        <dbReference type="ChEBI" id="CHEBI:30616"/>
    </ligand>
</feature>
<feature type="binding site" evidence="1">
    <location>
        <begin position="132"/>
        <end position="134"/>
    </location>
    <ligand>
        <name>ATP</name>
        <dbReference type="ChEBI" id="CHEBI:30616"/>
    </ligand>
</feature>
<feature type="binding site" evidence="1">
    <location>
        <position position="175"/>
    </location>
    <ligand>
        <name>ATP</name>
        <dbReference type="ChEBI" id="CHEBI:30616"/>
    </ligand>
</feature>
<feature type="binding site" evidence="1">
    <location>
        <position position="185"/>
    </location>
    <ligand>
        <name>ATP</name>
        <dbReference type="ChEBI" id="CHEBI:30616"/>
    </ligand>
</feature>
<feature type="binding site" evidence="1">
    <location>
        <position position="222"/>
    </location>
    <ligand>
        <name>ATP</name>
        <dbReference type="ChEBI" id="CHEBI:30616"/>
    </ligand>
</feature>
<feature type="binding site" evidence="1">
    <location>
        <position position="295"/>
    </location>
    <ligand>
        <name>DNA</name>
        <dbReference type="ChEBI" id="CHEBI:16991"/>
    </ligand>
</feature>
<feature type="binding site" evidence="1">
    <location>
        <position position="314"/>
    </location>
    <ligand>
        <name>DNA</name>
        <dbReference type="ChEBI" id="CHEBI:16991"/>
    </ligand>
</feature>
<feature type="binding site" evidence="1">
    <location>
        <position position="319"/>
    </location>
    <ligand>
        <name>DNA</name>
        <dbReference type="ChEBI" id="CHEBI:16991"/>
    </ligand>
</feature>
<protein>
    <recommendedName>
        <fullName evidence="1">Holliday junction branch migration complex subunit RuvB</fullName>
        <ecNumber evidence="1">3.6.4.-</ecNumber>
    </recommendedName>
</protein>
<evidence type="ECO:0000255" key="1">
    <source>
        <dbReference type="HAMAP-Rule" id="MF_00016"/>
    </source>
</evidence>
<evidence type="ECO:0000256" key="2">
    <source>
        <dbReference type="SAM" id="MobiDB-lite"/>
    </source>
</evidence>
<sequence length="343" mass="37555">MEEMASRMISGDPELGEPFQENGLRPKYLKEFVGQKPLKANLTVFLHAAKQRAEAIDHILLHGPPGLGKTTMAQIIAWEMGVGLRSTSGPVIDKAGDLAALLTNLNPGDVLFVDEIHRLSPAVEEILYPAMEDFQLDLMIGEGPSARSVKIDLPRFTLVGATTRAGMLTSPLRDRFGILARMQFYEPDELQQIVTRSASIMGIDISADGAFEIARRSRGTPRIANRLLRRVRDFAQVAGPGYIDKDLADRALLALEVDRNGLDNMDHRLLKALLDKFAGGPVGLDTLAAAIGEERSTIEDVIEPYLILQGMLDRTPRGRKATHASYTAMGRTAPRPVQQGTLL</sequence>